<feature type="chain" id="PRO_0000116398" description="Uncharacterized membrane protein C24H6.13">
    <location>
        <begin position="1"/>
        <end position="871"/>
    </location>
</feature>
<feature type="transmembrane region" description="Helical" evidence="2">
    <location>
        <begin position="11"/>
        <end position="31"/>
    </location>
</feature>
<feature type="transmembrane region" description="Helical" evidence="2">
    <location>
        <begin position="92"/>
        <end position="112"/>
    </location>
</feature>
<feature type="transmembrane region" description="Helical" evidence="2">
    <location>
        <begin position="139"/>
        <end position="159"/>
    </location>
</feature>
<feature type="transmembrane region" description="Helical" evidence="2">
    <location>
        <begin position="380"/>
        <end position="400"/>
    </location>
</feature>
<feature type="transmembrane region" description="Helical" evidence="2">
    <location>
        <begin position="422"/>
        <end position="442"/>
    </location>
</feature>
<feature type="transmembrane region" description="Helical" evidence="2">
    <location>
        <begin position="475"/>
        <end position="495"/>
    </location>
</feature>
<feature type="transmembrane region" description="Helical" evidence="2">
    <location>
        <begin position="520"/>
        <end position="540"/>
    </location>
</feature>
<feature type="transmembrane region" description="Helical" evidence="2">
    <location>
        <begin position="562"/>
        <end position="582"/>
    </location>
</feature>
<feature type="transmembrane region" description="Helical" evidence="2">
    <location>
        <begin position="586"/>
        <end position="606"/>
    </location>
</feature>
<feature type="transmembrane region" description="Helical" evidence="2">
    <location>
        <begin position="629"/>
        <end position="649"/>
    </location>
</feature>
<feature type="transmembrane region" description="Helical" evidence="2">
    <location>
        <begin position="653"/>
        <end position="673"/>
    </location>
</feature>
<feature type="region of interest" description="Disordered" evidence="3">
    <location>
        <begin position="727"/>
        <end position="746"/>
    </location>
</feature>
<feature type="compositionally biased region" description="Polar residues" evidence="3">
    <location>
        <begin position="727"/>
        <end position="740"/>
    </location>
</feature>
<feature type="modified residue" description="Phosphoserine" evidence="6">
    <location>
        <position position="725"/>
    </location>
</feature>
<feature type="modified residue" description="Phosphoserine" evidence="6">
    <location>
        <position position="726"/>
    </location>
</feature>
<feature type="modified residue" description="Phosphoserine" evidence="6">
    <location>
        <position position="727"/>
    </location>
</feature>
<feature type="modified residue" description="Phosphoserine" evidence="6">
    <location>
        <position position="729"/>
    </location>
</feature>
<feature type="modified residue" description="Phosphoserine" evidence="6">
    <location>
        <position position="737"/>
    </location>
</feature>
<feature type="modified residue" description="Phosphoserine" evidence="6">
    <location>
        <position position="761"/>
    </location>
</feature>
<sequence>MSDSSSSSTSAFVSSLVFNFAIFCAFIGLFLCLRPREKHVYQPRCIIDTQPKEEKPEPSPSSPFGLFAYVVKRSETYLIQYAGVDGYFFIRYLFTFGALCILGCLVLFPILLPVNATNGVGEKGFDILSFSNVKNHNRFYAHVFLSWLFFGFTIFIIYRELRYYVIFRHAMQSSGLYNNLPSSSTMLLTELPNSVLNDEETLHELFPNASEFTCVRDLKKLEKKVKKRSDLGNKYESTLNSLINKSVKKHNKLVKKHKPLPSTLDYTAYVKKRPTHRLKFLIGKKVDTIDYCRDTIAELDEVVDKLQTSLEERKKVGSVFIRFRSQTDLQTAYQAFLYSKKFRKYRFGRALVGIAPEDIVWSNLDLSMYTRRGKKTISNTILTLMIIFWAFPVAVVGCISNVNYLIEKVHFLKFIDHMPPKLLGIITGILPSVALSILMSLVPPFIKFLGKFGGALTVQEIENYCQNWYYAFQVVQVFLVTTMTSAATSAVVQVIKEPASSMTLLASNLPKASNFYISYFLLQGLSIPGGALLQIVTLLLSKVLGRIFDNTPRKKWNRWNQLSAPSWGTVYPVYSLLVTIMICYSIIAPIIIGFAAVAFVLIYFAYSYNLIYVLGHNADAKGRNYPRALFQVFVGLYLAEVCLIGLFVLAKNWGATVLEAVFLGFTVACHLYFKYKFLPLMDAVPISAIESVSERPEIKYPMDLGTSEMKNVGRAYPEILEKLSSSSGSDEFLETSSRTSENTKEKIDKDDEGFAITNISSVHKMPSFVLSYFSDLAASNRILTGFDRVLQLLPSFYDIPVRVRNVQYVSPALKATPPSVWIPKDPLGLSTYAIEDARGKVDIFDDNTTFNEKGNLQYTGPPPDYDEAIRS</sequence>
<evidence type="ECO:0000250" key="1"/>
<evidence type="ECO:0000255" key="2"/>
<evidence type="ECO:0000256" key="3">
    <source>
        <dbReference type="SAM" id="MobiDB-lite"/>
    </source>
</evidence>
<evidence type="ECO:0000269" key="4">
    <source>
    </source>
</evidence>
<evidence type="ECO:0000269" key="5">
    <source>
    </source>
</evidence>
<evidence type="ECO:0000269" key="6">
    <source>
    </source>
</evidence>
<evidence type="ECO:0000305" key="7"/>
<dbReference type="EMBL" id="CU329670">
    <property type="protein sequence ID" value="CAA90857.1"/>
    <property type="molecule type" value="Genomic_DNA"/>
</dbReference>
<dbReference type="EMBL" id="AB027849">
    <property type="protein sequence ID" value="BAA87153.1"/>
    <property type="molecule type" value="Genomic_DNA"/>
</dbReference>
<dbReference type="PIR" id="S62415">
    <property type="entry name" value="S62415"/>
</dbReference>
<dbReference type="RefSeq" id="NP_592939.1">
    <property type="nucleotide sequence ID" value="NM_001018340.2"/>
</dbReference>
<dbReference type="SMR" id="Q09766"/>
<dbReference type="BioGRID" id="278166">
    <property type="interactions" value="25"/>
</dbReference>
<dbReference type="FunCoup" id="Q09766">
    <property type="interactions" value="84"/>
</dbReference>
<dbReference type="STRING" id="284812.Q09766"/>
<dbReference type="iPTMnet" id="Q09766"/>
<dbReference type="PaxDb" id="4896-SPAC24H6.13.1"/>
<dbReference type="EnsemblFungi" id="SPAC24H6.13.1">
    <property type="protein sequence ID" value="SPAC24H6.13.1:pep"/>
    <property type="gene ID" value="SPAC24H6.13"/>
</dbReference>
<dbReference type="KEGG" id="spo:2541670"/>
<dbReference type="PomBase" id="SPAC24H6.13"/>
<dbReference type="VEuPathDB" id="FungiDB:SPAC24H6.13"/>
<dbReference type="eggNOG" id="KOG1134">
    <property type="taxonomic scope" value="Eukaryota"/>
</dbReference>
<dbReference type="HOGENOM" id="CLU_002458_2_1_1"/>
<dbReference type="InParanoid" id="Q09766"/>
<dbReference type="OMA" id="NWACVAL"/>
<dbReference type="PhylomeDB" id="Q09766"/>
<dbReference type="Reactome" id="R-SPO-6798695">
    <property type="pathway name" value="Neutrophil degranulation"/>
</dbReference>
<dbReference type="PRO" id="PR:Q09766"/>
<dbReference type="Proteomes" id="UP000002485">
    <property type="component" value="Chromosome I"/>
</dbReference>
<dbReference type="GO" id="GO:0000139">
    <property type="term" value="C:Golgi membrane"/>
    <property type="evidence" value="ECO:0007669"/>
    <property type="project" value="UniProtKB-SubCell"/>
</dbReference>
<dbReference type="GO" id="GO:0005886">
    <property type="term" value="C:plasma membrane"/>
    <property type="evidence" value="ECO:0000318"/>
    <property type="project" value="GO_Central"/>
</dbReference>
<dbReference type="GO" id="GO:0005227">
    <property type="term" value="F:calcium-activated cation channel activity"/>
    <property type="evidence" value="ECO:0000318"/>
    <property type="project" value="GO_Central"/>
</dbReference>
<dbReference type="InterPro" id="IPR045122">
    <property type="entry name" value="Csc1-like"/>
</dbReference>
<dbReference type="InterPro" id="IPR003864">
    <property type="entry name" value="CSC1/OSCA1-like_7TM"/>
</dbReference>
<dbReference type="InterPro" id="IPR027815">
    <property type="entry name" value="CSC1/OSCA1-like_cyt"/>
</dbReference>
<dbReference type="InterPro" id="IPR032880">
    <property type="entry name" value="Csc1/OSCA1-like_N"/>
</dbReference>
<dbReference type="InterPro" id="IPR022257">
    <property type="entry name" value="PHM7_ext"/>
</dbReference>
<dbReference type="PANTHER" id="PTHR13018:SF139">
    <property type="entry name" value="PHOSPHATE METABOLISM PROTEIN 7"/>
    <property type="match status" value="1"/>
</dbReference>
<dbReference type="PANTHER" id="PTHR13018">
    <property type="entry name" value="PROBABLE MEMBRANE PROTEIN DUF221-RELATED"/>
    <property type="match status" value="1"/>
</dbReference>
<dbReference type="Pfam" id="PF14703">
    <property type="entry name" value="PHM7_cyt"/>
    <property type="match status" value="1"/>
</dbReference>
<dbReference type="Pfam" id="PF12621">
    <property type="entry name" value="PHM7_ext"/>
    <property type="match status" value="1"/>
</dbReference>
<dbReference type="Pfam" id="PF02714">
    <property type="entry name" value="RSN1_7TM"/>
    <property type="match status" value="1"/>
</dbReference>
<dbReference type="Pfam" id="PF13967">
    <property type="entry name" value="RSN1_TM"/>
    <property type="match status" value="1"/>
</dbReference>
<comment type="function">
    <text evidence="1">Acts as an osmosensitive calcium-permeable cation channel.</text>
</comment>
<comment type="subcellular location">
    <subcellularLocation>
        <location evidence="4 5">Golgi apparatus membrane</location>
        <topology evidence="4 5">Multi-pass membrane protein</topology>
    </subcellularLocation>
</comment>
<comment type="similarity">
    <text evidence="7">Belongs to the CSC1 (TC 1.A.17) family.</text>
</comment>
<organism>
    <name type="scientific">Schizosaccharomyces pombe (strain 972 / ATCC 24843)</name>
    <name type="common">Fission yeast</name>
    <dbReference type="NCBI Taxonomy" id="284812"/>
    <lineage>
        <taxon>Eukaryota</taxon>
        <taxon>Fungi</taxon>
        <taxon>Dikarya</taxon>
        <taxon>Ascomycota</taxon>
        <taxon>Taphrinomycotina</taxon>
        <taxon>Schizosaccharomycetes</taxon>
        <taxon>Schizosaccharomycetales</taxon>
        <taxon>Schizosaccharomycetaceae</taxon>
        <taxon>Schizosaccharomyces</taxon>
    </lineage>
</organism>
<gene>
    <name type="ORF">SPAC24H6.13</name>
</gene>
<reference key="1">
    <citation type="journal article" date="2002" name="Nature">
        <title>The genome sequence of Schizosaccharomyces pombe.</title>
        <authorList>
            <person name="Wood V."/>
            <person name="Gwilliam R."/>
            <person name="Rajandream M.A."/>
            <person name="Lyne M.H."/>
            <person name="Lyne R."/>
            <person name="Stewart A."/>
            <person name="Sgouros J.G."/>
            <person name="Peat N."/>
            <person name="Hayles J."/>
            <person name="Baker S.G."/>
            <person name="Basham D."/>
            <person name="Bowman S."/>
            <person name="Brooks K."/>
            <person name="Brown D."/>
            <person name="Brown S."/>
            <person name="Chillingworth T."/>
            <person name="Churcher C.M."/>
            <person name="Collins M."/>
            <person name="Connor R."/>
            <person name="Cronin A."/>
            <person name="Davis P."/>
            <person name="Feltwell T."/>
            <person name="Fraser A."/>
            <person name="Gentles S."/>
            <person name="Goble A."/>
            <person name="Hamlin N."/>
            <person name="Harris D.E."/>
            <person name="Hidalgo J."/>
            <person name="Hodgson G."/>
            <person name="Holroyd S."/>
            <person name="Hornsby T."/>
            <person name="Howarth S."/>
            <person name="Huckle E.J."/>
            <person name="Hunt S."/>
            <person name="Jagels K."/>
            <person name="James K.D."/>
            <person name="Jones L."/>
            <person name="Jones M."/>
            <person name="Leather S."/>
            <person name="McDonald S."/>
            <person name="McLean J."/>
            <person name="Mooney P."/>
            <person name="Moule S."/>
            <person name="Mungall K.L."/>
            <person name="Murphy L.D."/>
            <person name="Niblett D."/>
            <person name="Odell C."/>
            <person name="Oliver K."/>
            <person name="O'Neil S."/>
            <person name="Pearson D."/>
            <person name="Quail M.A."/>
            <person name="Rabbinowitsch E."/>
            <person name="Rutherford K.M."/>
            <person name="Rutter S."/>
            <person name="Saunders D."/>
            <person name="Seeger K."/>
            <person name="Sharp S."/>
            <person name="Skelton J."/>
            <person name="Simmonds M.N."/>
            <person name="Squares R."/>
            <person name="Squares S."/>
            <person name="Stevens K."/>
            <person name="Taylor K."/>
            <person name="Taylor R.G."/>
            <person name="Tivey A."/>
            <person name="Walsh S.V."/>
            <person name="Warren T."/>
            <person name="Whitehead S."/>
            <person name="Woodward J.R."/>
            <person name="Volckaert G."/>
            <person name="Aert R."/>
            <person name="Robben J."/>
            <person name="Grymonprez B."/>
            <person name="Weltjens I."/>
            <person name="Vanstreels E."/>
            <person name="Rieger M."/>
            <person name="Schaefer M."/>
            <person name="Mueller-Auer S."/>
            <person name="Gabel C."/>
            <person name="Fuchs M."/>
            <person name="Duesterhoeft A."/>
            <person name="Fritzc C."/>
            <person name="Holzer E."/>
            <person name="Moestl D."/>
            <person name="Hilbert H."/>
            <person name="Borzym K."/>
            <person name="Langer I."/>
            <person name="Beck A."/>
            <person name="Lehrach H."/>
            <person name="Reinhardt R."/>
            <person name="Pohl T.M."/>
            <person name="Eger P."/>
            <person name="Zimmermann W."/>
            <person name="Wedler H."/>
            <person name="Wambutt R."/>
            <person name="Purnelle B."/>
            <person name="Goffeau A."/>
            <person name="Cadieu E."/>
            <person name="Dreano S."/>
            <person name="Gloux S."/>
            <person name="Lelaure V."/>
            <person name="Mottier S."/>
            <person name="Galibert F."/>
            <person name="Aves S.J."/>
            <person name="Xiang Z."/>
            <person name="Hunt C."/>
            <person name="Moore K."/>
            <person name="Hurst S.M."/>
            <person name="Lucas M."/>
            <person name="Rochet M."/>
            <person name="Gaillardin C."/>
            <person name="Tallada V.A."/>
            <person name="Garzon A."/>
            <person name="Thode G."/>
            <person name="Daga R.R."/>
            <person name="Cruzado L."/>
            <person name="Jimenez J."/>
            <person name="Sanchez M."/>
            <person name="del Rey F."/>
            <person name="Benito J."/>
            <person name="Dominguez A."/>
            <person name="Revuelta J.L."/>
            <person name="Moreno S."/>
            <person name="Armstrong J."/>
            <person name="Forsburg S.L."/>
            <person name="Cerutti L."/>
            <person name="Lowe T."/>
            <person name="McCombie W.R."/>
            <person name="Paulsen I."/>
            <person name="Potashkin J."/>
            <person name="Shpakovski G.V."/>
            <person name="Ussery D."/>
            <person name="Barrell B.G."/>
            <person name="Nurse P."/>
        </authorList>
    </citation>
    <scope>NUCLEOTIDE SEQUENCE [LARGE SCALE GENOMIC DNA]</scope>
    <source>
        <strain>972 / ATCC 24843</strain>
    </source>
</reference>
<reference key="2">
    <citation type="journal article" date="2000" name="Genes Cells">
        <title>Large-scale screening of intracellular protein localization in living fission yeast cells by the use of a GFP-fusion genomic DNA library.</title>
        <authorList>
            <person name="Ding D.-Q."/>
            <person name="Tomita Y."/>
            <person name="Yamamoto A."/>
            <person name="Chikashige Y."/>
            <person name="Haraguchi T."/>
            <person name="Hiraoka Y."/>
        </authorList>
    </citation>
    <scope>NUCLEOTIDE SEQUENCE [LARGE SCALE GENOMIC DNA] OF 570-782</scope>
    <scope>SUBCELLULAR LOCATION</scope>
    <source>
        <strain>ATCC 38364 / 968</strain>
    </source>
</reference>
<reference key="3">
    <citation type="journal article" date="2006" name="Nat. Biotechnol.">
        <title>ORFeome cloning and global analysis of protein localization in the fission yeast Schizosaccharomyces pombe.</title>
        <authorList>
            <person name="Matsuyama A."/>
            <person name="Arai R."/>
            <person name="Yashiroda Y."/>
            <person name="Shirai A."/>
            <person name="Kamata A."/>
            <person name="Sekido S."/>
            <person name="Kobayashi Y."/>
            <person name="Hashimoto A."/>
            <person name="Hamamoto M."/>
            <person name="Hiraoka Y."/>
            <person name="Horinouchi S."/>
            <person name="Yoshida M."/>
        </authorList>
    </citation>
    <scope>SUBCELLULAR LOCATION [LARGE SCALE ANALYSIS]</scope>
</reference>
<reference key="4">
    <citation type="journal article" date="2008" name="J. Proteome Res.">
        <title>Phosphoproteome analysis of fission yeast.</title>
        <authorList>
            <person name="Wilson-Grady J.T."/>
            <person name="Villen J."/>
            <person name="Gygi S.P."/>
        </authorList>
    </citation>
    <scope>PHOSPHORYLATION [LARGE SCALE ANALYSIS] AT SER-725; SER-726; SER-727; SER-729; SER-737 AND SER-761</scope>
    <scope>IDENTIFICATION BY MASS SPECTROMETRY</scope>
</reference>
<keyword id="KW-0106">Calcium</keyword>
<keyword id="KW-0333">Golgi apparatus</keyword>
<keyword id="KW-0407">Ion channel</keyword>
<keyword id="KW-0406">Ion transport</keyword>
<keyword id="KW-0472">Membrane</keyword>
<keyword id="KW-0597">Phosphoprotein</keyword>
<keyword id="KW-1185">Reference proteome</keyword>
<keyword id="KW-0812">Transmembrane</keyword>
<keyword id="KW-1133">Transmembrane helix</keyword>
<keyword id="KW-0813">Transport</keyword>
<protein>
    <recommendedName>
        <fullName>Uncharacterized membrane protein C24H6.13</fullName>
    </recommendedName>
</protein>
<accession>Q09766</accession>
<accession>Q9USD2</accession>
<name>YA7D_SCHPO</name>
<proteinExistence type="evidence at protein level"/>